<name>GYRA_MYCFV</name>
<accession>Q49166</accession>
<proteinExistence type="inferred from homology"/>
<gene>
    <name type="primary">gyrA</name>
</gene>
<protein>
    <recommendedName>
        <fullName>DNA gyrase subunit A</fullName>
        <ecNumber evidence="4">5.6.2.2</ecNumber>
    </recommendedName>
    <component>
        <recommendedName>
            <fullName>Mfl GyrA intein</fullName>
        </recommendedName>
    </component>
</protein>
<reference key="1">
    <citation type="journal article" date="1996" name="Proc. Natl. Acad. Sci. U.S.A.">
        <title>Homing events in the gyrA gene of some mycobacteria.</title>
        <authorList>
            <person name="Fsihi H."/>
            <person name="Vincent V."/>
            <person name="Cole S.T."/>
        </authorList>
    </citation>
    <scope>NUCLEOTIDE SEQUENCE [GENOMIC DNA]</scope>
    <source>
        <strain>FLA0 / 930991</strain>
    </source>
</reference>
<comment type="function">
    <text evidence="2">A type II topoisomerase that negatively supercoils closed circular double-stranded (ds) DNA in an ATP-dependent manner to modulate DNA topology and maintain chromosomes in an underwound state. Negative supercoiling favors strand separation, and DNA replication, transcription, recombination and repair, all of which involve strand separation. Also able to catalyze the interconversion of other topological isomers of dsDNA rings, including catenanes and knotted rings. Type II topoisomerases break and join 2 DNA strands simultaneously in an ATP-dependent manner.</text>
</comment>
<comment type="catalytic activity">
    <reaction evidence="4">
        <text>ATP-dependent breakage, passage and rejoining of double-stranded DNA.</text>
        <dbReference type="EC" id="5.6.2.2"/>
    </reaction>
</comment>
<comment type="subunit">
    <text evidence="2">Heterotetramer, composed of two GyrA and two GyrB chains. In the heterotetramer, GyrA contains the active site tyrosine that forms a transient covalent intermediate with DNA, while GyrB binds cofactors and catalyzes ATP hydrolysis.</text>
</comment>
<comment type="subcellular location">
    <subcellularLocation>
        <location evidence="2">Cytoplasm</location>
    </subcellularLocation>
</comment>
<comment type="PTM">
    <text evidence="1">This protein undergoes a protein self splicing that involves a post-translational excision of the intervening region (intein) followed by peptide ligation.</text>
</comment>
<comment type="miscellaneous">
    <text evidence="2">Few gyrases are as efficient as E.coli at forming negative supercoils. Not all organisms have 2 type II topoisomerases; in organisms with a single type II topoisomerase this enzyme also has to decatenate newly replicated chromosomes.</text>
</comment>
<comment type="similarity">
    <text evidence="5">Belongs to the type II topoisomerase GyrA/ParC subunit family.</text>
</comment>
<dbReference type="EC" id="5.6.2.2" evidence="4"/>
<dbReference type="EMBL" id="Z68209">
    <property type="protein sequence ID" value="CAA92433.1"/>
    <property type="molecule type" value="Genomic_DNA"/>
</dbReference>
<dbReference type="SMR" id="Q49166"/>
<dbReference type="STRING" id="1776.BHQ18_27855"/>
<dbReference type="GO" id="GO:0005737">
    <property type="term" value="C:cytoplasm"/>
    <property type="evidence" value="ECO:0007669"/>
    <property type="project" value="UniProtKB-SubCell"/>
</dbReference>
<dbReference type="GO" id="GO:0009330">
    <property type="term" value="C:DNA topoisomerase type II (double strand cut, ATP-hydrolyzing) complex"/>
    <property type="evidence" value="ECO:0007669"/>
    <property type="project" value="TreeGrafter"/>
</dbReference>
<dbReference type="GO" id="GO:0005524">
    <property type="term" value="F:ATP binding"/>
    <property type="evidence" value="ECO:0007669"/>
    <property type="project" value="UniProtKB-KW"/>
</dbReference>
<dbReference type="GO" id="GO:0003677">
    <property type="term" value="F:DNA binding"/>
    <property type="evidence" value="ECO:0007669"/>
    <property type="project" value="UniProtKB-KW"/>
</dbReference>
<dbReference type="GO" id="GO:0034335">
    <property type="term" value="F:DNA negative supercoiling activity"/>
    <property type="evidence" value="ECO:0007669"/>
    <property type="project" value="UniProtKB-ARBA"/>
</dbReference>
<dbReference type="GO" id="GO:0004519">
    <property type="term" value="F:endonuclease activity"/>
    <property type="evidence" value="ECO:0007669"/>
    <property type="project" value="UniProtKB-KW"/>
</dbReference>
<dbReference type="GO" id="GO:0006265">
    <property type="term" value="P:DNA topological change"/>
    <property type="evidence" value="ECO:0007669"/>
    <property type="project" value="InterPro"/>
</dbReference>
<dbReference type="GO" id="GO:0016539">
    <property type="term" value="P:intein-mediated protein splicing"/>
    <property type="evidence" value="ECO:0007669"/>
    <property type="project" value="InterPro"/>
</dbReference>
<dbReference type="GO" id="GO:0006314">
    <property type="term" value="P:intron homing"/>
    <property type="evidence" value="ECO:0007669"/>
    <property type="project" value="UniProtKB-KW"/>
</dbReference>
<dbReference type="CDD" id="cd00081">
    <property type="entry name" value="Hint"/>
    <property type="match status" value="1"/>
</dbReference>
<dbReference type="Gene3D" id="2.170.16.10">
    <property type="entry name" value="Hedgehog/Intein (Hint) domain"/>
    <property type="match status" value="2"/>
</dbReference>
<dbReference type="Gene3D" id="3.10.28.10">
    <property type="entry name" value="Homing endonucleases"/>
    <property type="match status" value="1"/>
</dbReference>
<dbReference type="Gene3D" id="3.90.199.10">
    <property type="entry name" value="Topoisomerase II, domain 5"/>
    <property type="match status" value="2"/>
</dbReference>
<dbReference type="InterPro" id="IPR003586">
    <property type="entry name" value="Hint_dom_C"/>
</dbReference>
<dbReference type="InterPro" id="IPR003587">
    <property type="entry name" value="Hint_dom_N"/>
</dbReference>
<dbReference type="InterPro" id="IPR036844">
    <property type="entry name" value="Hint_dom_sf"/>
</dbReference>
<dbReference type="InterPro" id="IPR027434">
    <property type="entry name" value="Homing_endonucl"/>
</dbReference>
<dbReference type="InterPro" id="IPR006142">
    <property type="entry name" value="INTEIN"/>
</dbReference>
<dbReference type="InterPro" id="IPR030934">
    <property type="entry name" value="Intein_C"/>
</dbReference>
<dbReference type="InterPro" id="IPR004042">
    <property type="entry name" value="Intein_endonuc_central"/>
</dbReference>
<dbReference type="InterPro" id="IPR006141">
    <property type="entry name" value="Intein_N"/>
</dbReference>
<dbReference type="InterPro" id="IPR004860">
    <property type="entry name" value="LAGLIDADG_dom"/>
</dbReference>
<dbReference type="InterPro" id="IPR013760">
    <property type="entry name" value="Topo_IIA-like_dom_sf"/>
</dbReference>
<dbReference type="InterPro" id="IPR013758">
    <property type="entry name" value="Topo_IIA_A/C_ab"/>
</dbReference>
<dbReference type="InterPro" id="IPR002205">
    <property type="entry name" value="Topo_IIA_dom_A"/>
</dbReference>
<dbReference type="InterPro" id="IPR050220">
    <property type="entry name" value="Type_II_DNA_Topoisomerases"/>
</dbReference>
<dbReference type="NCBIfam" id="TIGR01443">
    <property type="entry name" value="intein_Cterm"/>
    <property type="match status" value="1"/>
</dbReference>
<dbReference type="NCBIfam" id="TIGR01445">
    <property type="entry name" value="intein_Nterm"/>
    <property type="match status" value="1"/>
</dbReference>
<dbReference type="PANTHER" id="PTHR43493:SF5">
    <property type="entry name" value="DNA GYRASE SUBUNIT A, CHLOROPLASTIC_MITOCHONDRIAL"/>
    <property type="match status" value="1"/>
</dbReference>
<dbReference type="PANTHER" id="PTHR43493">
    <property type="entry name" value="DNA GYRASE/TOPOISOMERASE SUBUNIT A"/>
    <property type="match status" value="1"/>
</dbReference>
<dbReference type="Pfam" id="PF00521">
    <property type="entry name" value="DNA_topoisoIV"/>
    <property type="match status" value="2"/>
</dbReference>
<dbReference type="Pfam" id="PF14890">
    <property type="entry name" value="Intein_splicing"/>
    <property type="match status" value="1"/>
</dbReference>
<dbReference type="Pfam" id="PF14528">
    <property type="entry name" value="LAGLIDADG_3"/>
    <property type="match status" value="1"/>
</dbReference>
<dbReference type="PRINTS" id="PR00379">
    <property type="entry name" value="INTEIN"/>
</dbReference>
<dbReference type="SMART" id="SM00305">
    <property type="entry name" value="HintC"/>
    <property type="match status" value="1"/>
</dbReference>
<dbReference type="SMART" id="SM00306">
    <property type="entry name" value="HintN"/>
    <property type="match status" value="1"/>
</dbReference>
<dbReference type="SMART" id="SM00434">
    <property type="entry name" value="TOP4c"/>
    <property type="match status" value="1"/>
</dbReference>
<dbReference type="SUPFAM" id="SSF51294">
    <property type="entry name" value="Hedgehog/intein (Hint) domain"/>
    <property type="match status" value="1"/>
</dbReference>
<dbReference type="SUPFAM" id="SSF55608">
    <property type="entry name" value="Homing endonucleases"/>
    <property type="match status" value="1"/>
</dbReference>
<dbReference type="SUPFAM" id="SSF56719">
    <property type="entry name" value="Type II DNA topoisomerase"/>
    <property type="match status" value="2"/>
</dbReference>
<dbReference type="PROSITE" id="PS50818">
    <property type="entry name" value="INTEIN_C_TER"/>
    <property type="match status" value="1"/>
</dbReference>
<dbReference type="PROSITE" id="PS50819">
    <property type="entry name" value="INTEIN_ENDONUCLEASE"/>
    <property type="match status" value="1"/>
</dbReference>
<dbReference type="PROSITE" id="PS50817">
    <property type="entry name" value="INTEIN_N_TER"/>
    <property type="match status" value="1"/>
</dbReference>
<dbReference type="PROSITE" id="PS52040">
    <property type="entry name" value="TOPO_IIA"/>
    <property type="match status" value="1"/>
</dbReference>
<organism>
    <name type="scientific">Mycolicibacterium flavescens</name>
    <name type="common">Mycobacterium flavescens</name>
    <dbReference type="NCBI Taxonomy" id="1776"/>
    <lineage>
        <taxon>Bacteria</taxon>
        <taxon>Bacillati</taxon>
        <taxon>Actinomycetota</taxon>
        <taxon>Actinomycetes</taxon>
        <taxon>Mycobacteriales</taxon>
        <taxon>Mycobacteriaceae</taxon>
        <taxon>Mycolicibacterium</taxon>
    </lineage>
</organism>
<sequence length="554" mass="60953">RGIFRPDRSHAKSARSVAETMGNYHPHGDASIYDTLVRMAQPWSLRYPLVDGQGNFGSPGNDPPAAMRYCVTGDALVRLPFGQSVRLRDVVAGARSSSDNAIDLKVLNRHGDPVVADKLFHSGEHETYTVRTAEGYEVTGTANHPLLCLVDVGGVPTLLWKLTEEIRPGDHVVLQRTPPTEFGPADWQDAFEALHLGAFISEGFVSENRAGFNNLDREFFNAVLTAYDTIVGGPRYVSSRTIASDSLLHELDVHNLTALKKSRLGELVGQRSADKAVPEWLWKAPAVVKRVFLQALFEGDGSCSALPRNTIQVSYSTRSGRLAKDIQQMLLEFGVISRRYVHATGEHKVVLTSRAQAELFAAQIGFGGIKQAKLQGLLDALPQAAAGRDGDYVPGLAQFVRKHSGSRWVDKDWLNRHNIDRLSRWQRDGAEILGRIADPDVRAIAQELTDGRFYYARVASVTDSGVQPVYSLRVDTDDHSFITNGFVSHNTEARLTPLAMEMLREIDEETVDFIPNYDGRVQEPTVLPSRFPNLLANGSGGIAVGMATNIPPHN</sequence>
<evidence type="ECO:0000250" key="1"/>
<evidence type="ECO:0000250" key="2">
    <source>
        <dbReference type="UniProtKB" id="P0AES4"/>
    </source>
</evidence>
<evidence type="ECO:0000255" key="3">
    <source>
        <dbReference type="PROSITE-ProRule" id="PRU00273"/>
    </source>
</evidence>
<evidence type="ECO:0000255" key="4">
    <source>
        <dbReference type="PROSITE-ProRule" id="PRU01384"/>
    </source>
</evidence>
<evidence type="ECO:0000305" key="5"/>
<keyword id="KW-0067">ATP-binding</keyword>
<keyword id="KW-0068">Autocatalytic cleavage</keyword>
<keyword id="KW-0963">Cytoplasm</keyword>
<keyword id="KW-0238">DNA-binding</keyword>
<keyword id="KW-0255">Endonuclease</keyword>
<keyword id="KW-0378">Hydrolase</keyword>
<keyword id="KW-0404">Intron homing</keyword>
<keyword id="KW-0413">Isomerase</keyword>
<keyword id="KW-0540">Nuclease</keyword>
<keyword id="KW-0547">Nucleotide-binding</keyword>
<keyword id="KW-0651">Protein splicing</keyword>
<keyword id="KW-0799">Topoisomerase</keyword>
<feature type="chain" id="PRO_0000034798" description="DNA gyrase subunit A, 1st part" evidence="2">
    <location>
        <begin position="1" status="less than"/>
        <end position="69"/>
    </location>
</feature>
<feature type="chain" id="PRO_0000034799" description="Mfl GyrA intein" evidence="1">
    <location>
        <begin position="70"/>
        <end position="490"/>
    </location>
</feature>
<feature type="chain" id="PRO_0000034800" description="DNA gyrase subunit A, 2nd part" evidence="1">
    <location>
        <begin position="491"/>
        <end position="554" status="greater than"/>
    </location>
</feature>
<feature type="domain" description="Topo IIA-type catalytic" evidence="4">
    <location>
        <begin position="1"/>
        <end position="554"/>
    </location>
</feature>
<feature type="domain" description="DOD-type homing endonuclease" evidence="3">
    <location>
        <begin position="195"/>
        <end position="335"/>
    </location>
</feature>
<feature type="active site" description="O-(5'-phospho-DNA)-tyrosine intermediate" evidence="4">
    <location>
        <position position="69"/>
    </location>
</feature>
<feature type="non-terminal residue">
    <location>
        <position position="1"/>
    </location>
</feature>
<feature type="non-terminal residue">
    <location>
        <position position="554"/>
    </location>
</feature>